<dbReference type="EMBL" id="AY362304">
    <property type="protein sequence ID" value="AAQ85072.1"/>
    <property type="molecule type" value="Genomic_DNA"/>
</dbReference>
<dbReference type="EMBL" id="AY362300">
    <property type="protein sequence ID" value="AAQ85072.1"/>
    <property type="status" value="JOINED"/>
    <property type="molecule type" value="Genomic_DNA"/>
</dbReference>
<dbReference type="EMBL" id="AY362301">
    <property type="protein sequence ID" value="AAQ85072.1"/>
    <property type="status" value="JOINED"/>
    <property type="molecule type" value="Genomic_DNA"/>
</dbReference>
<dbReference type="EMBL" id="AY362302">
    <property type="protein sequence ID" value="AAQ85072.1"/>
    <property type="status" value="JOINED"/>
    <property type="molecule type" value="Genomic_DNA"/>
</dbReference>
<dbReference type="EMBL" id="AY362303">
    <property type="protein sequence ID" value="AAQ85072.1"/>
    <property type="status" value="JOINED"/>
    <property type="molecule type" value="Genomic_DNA"/>
</dbReference>
<dbReference type="RefSeq" id="XP_004039169.1">
    <property type="nucleotide sequence ID" value="XM_004039121.5"/>
</dbReference>
<dbReference type="RefSeq" id="XP_004039170.1">
    <property type="nucleotide sequence ID" value="XM_004039122.2"/>
</dbReference>
<dbReference type="RefSeq" id="XP_004039171.1">
    <property type="nucleotide sequence ID" value="XM_004039123.2"/>
</dbReference>
<dbReference type="RefSeq" id="XP_004039173.1">
    <property type="nucleotide sequence ID" value="XM_004039125.2"/>
</dbReference>
<dbReference type="RefSeq" id="XP_004039174.1">
    <property type="nucleotide sequence ID" value="XM_004039126.2"/>
</dbReference>
<dbReference type="RefSeq" id="XP_055240056.1">
    <property type="nucleotide sequence ID" value="XM_055384081.2"/>
</dbReference>
<dbReference type="RefSeq" id="XP_055240057.1">
    <property type="nucleotide sequence ID" value="XM_055384082.2"/>
</dbReference>
<dbReference type="RefSeq" id="XP_055240059.1">
    <property type="nucleotide sequence ID" value="XM_055384084.2"/>
</dbReference>
<dbReference type="RefSeq" id="XP_055240060.1">
    <property type="nucleotide sequence ID" value="XM_055384085.2"/>
</dbReference>
<dbReference type="BMRB" id="P61140"/>
<dbReference type="SMR" id="P61140"/>
<dbReference type="FunCoup" id="P61140">
    <property type="interactions" value="315"/>
</dbReference>
<dbReference type="STRING" id="9593.ENSGGOP00000027281"/>
<dbReference type="Ensembl" id="ENSGGOT00000022254.2">
    <property type="protein sequence ID" value="ENSGGOP00000027281.1"/>
    <property type="gene ID" value="ENSGGOG00000005705.3"/>
</dbReference>
<dbReference type="GeneID" id="101146366"/>
<dbReference type="CTD" id="6622"/>
<dbReference type="eggNOG" id="ENOG502S0Q7">
    <property type="taxonomic scope" value="Eukaryota"/>
</dbReference>
<dbReference type="GeneTree" id="ENSGT00950000183175"/>
<dbReference type="HOGENOM" id="CLU_129378_1_0_1"/>
<dbReference type="InParanoid" id="P61140"/>
<dbReference type="OMA" id="LPQEGMM"/>
<dbReference type="Proteomes" id="UP000001519">
    <property type="component" value="Chromosome 4"/>
</dbReference>
<dbReference type="Bgee" id="ENSGGOG00000005705">
    <property type="expression patterns" value="Expressed in prefrontal cortex and 5 other cell types or tissues"/>
</dbReference>
<dbReference type="GO" id="GO:0015629">
    <property type="term" value="C:actin cytoskeleton"/>
    <property type="evidence" value="ECO:0007669"/>
    <property type="project" value="Ensembl"/>
</dbReference>
<dbReference type="GO" id="GO:0043679">
    <property type="term" value="C:axon terminus"/>
    <property type="evidence" value="ECO:0000318"/>
    <property type="project" value="GO_Central"/>
</dbReference>
<dbReference type="GO" id="GO:0005938">
    <property type="term" value="C:cell cortex"/>
    <property type="evidence" value="ECO:0007669"/>
    <property type="project" value="Ensembl"/>
</dbReference>
<dbReference type="GO" id="GO:0005737">
    <property type="term" value="C:cytoplasm"/>
    <property type="evidence" value="ECO:0000318"/>
    <property type="project" value="GO_Central"/>
</dbReference>
<dbReference type="GO" id="GO:0005829">
    <property type="term" value="C:cytosol"/>
    <property type="evidence" value="ECO:0000250"/>
    <property type="project" value="UniProtKB"/>
</dbReference>
<dbReference type="GO" id="GO:0005615">
    <property type="term" value="C:extracellular space"/>
    <property type="evidence" value="ECO:0000250"/>
    <property type="project" value="UniProtKB"/>
</dbReference>
<dbReference type="GO" id="GO:0030426">
    <property type="term" value="C:growth cone"/>
    <property type="evidence" value="ECO:0007669"/>
    <property type="project" value="Ensembl"/>
</dbReference>
<dbReference type="GO" id="GO:0016234">
    <property type="term" value="C:inclusion body"/>
    <property type="evidence" value="ECO:0007669"/>
    <property type="project" value="Ensembl"/>
</dbReference>
<dbReference type="GO" id="GO:0016020">
    <property type="term" value="C:membrane"/>
    <property type="evidence" value="ECO:0000250"/>
    <property type="project" value="UniProtKB"/>
</dbReference>
<dbReference type="GO" id="GO:0005739">
    <property type="term" value="C:mitochondrion"/>
    <property type="evidence" value="ECO:0007669"/>
    <property type="project" value="GOC"/>
</dbReference>
<dbReference type="GO" id="GO:0043025">
    <property type="term" value="C:neuronal cell body"/>
    <property type="evidence" value="ECO:0000318"/>
    <property type="project" value="GO_Central"/>
</dbReference>
<dbReference type="GO" id="GO:0005634">
    <property type="term" value="C:nucleus"/>
    <property type="evidence" value="ECO:0000250"/>
    <property type="project" value="UniProtKB"/>
</dbReference>
<dbReference type="GO" id="GO:0048471">
    <property type="term" value="C:perinuclear region of cytoplasm"/>
    <property type="evidence" value="ECO:0007669"/>
    <property type="project" value="Ensembl"/>
</dbReference>
<dbReference type="GO" id="GO:0005886">
    <property type="term" value="C:plasma membrane"/>
    <property type="evidence" value="ECO:0007669"/>
    <property type="project" value="Ensembl"/>
</dbReference>
<dbReference type="GO" id="GO:0031092">
    <property type="term" value="C:platelet alpha granule membrane"/>
    <property type="evidence" value="ECO:0007669"/>
    <property type="project" value="Ensembl"/>
</dbReference>
<dbReference type="GO" id="GO:0098794">
    <property type="term" value="C:postsynapse"/>
    <property type="evidence" value="ECO:0007669"/>
    <property type="project" value="GOC"/>
</dbReference>
<dbReference type="GO" id="GO:0032991">
    <property type="term" value="C:protein-containing complex"/>
    <property type="evidence" value="ECO:0007669"/>
    <property type="project" value="Ensembl"/>
</dbReference>
<dbReference type="GO" id="GO:0099512">
    <property type="term" value="C:supramolecular fiber"/>
    <property type="evidence" value="ECO:0007669"/>
    <property type="project" value="Ensembl"/>
</dbReference>
<dbReference type="GO" id="GO:0030672">
    <property type="term" value="C:synaptic vesicle membrane"/>
    <property type="evidence" value="ECO:0007669"/>
    <property type="project" value="Ensembl"/>
</dbReference>
<dbReference type="GO" id="GO:0003779">
    <property type="term" value="F:actin binding"/>
    <property type="evidence" value="ECO:0007669"/>
    <property type="project" value="Ensembl"/>
</dbReference>
<dbReference type="GO" id="GO:0043014">
    <property type="term" value="F:alpha-tubulin binding"/>
    <property type="evidence" value="ECO:0007669"/>
    <property type="project" value="Ensembl"/>
</dbReference>
<dbReference type="GO" id="GO:0050544">
    <property type="term" value="F:arachidonate binding"/>
    <property type="evidence" value="ECO:0007669"/>
    <property type="project" value="Ensembl"/>
</dbReference>
<dbReference type="GO" id="GO:0005509">
    <property type="term" value="F:calcium ion binding"/>
    <property type="evidence" value="ECO:0007669"/>
    <property type="project" value="Ensembl"/>
</dbReference>
<dbReference type="GO" id="GO:0005507">
    <property type="term" value="F:copper ion binding"/>
    <property type="evidence" value="ECO:0000250"/>
    <property type="project" value="UniProtKB"/>
</dbReference>
<dbReference type="GO" id="GO:1903136">
    <property type="term" value="F:cuprous ion binding"/>
    <property type="evidence" value="ECO:0000318"/>
    <property type="project" value="GO_Central"/>
</dbReference>
<dbReference type="GO" id="GO:0004869">
    <property type="term" value="F:cysteine-type endopeptidase inhibitor activity"/>
    <property type="evidence" value="ECO:0007669"/>
    <property type="project" value="Ensembl"/>
</dbReference>
<dbReference type="GO" id="GO:0070840">
    <property type="term" value="F:dynein complex binding"/>
    <property type="evidence" value="ECO:0007669"/>
    <property type="project" value="Ensembl"/>
</dbReference>
<dbReference type="GO" id="GO:0008198">
    <property type="term" value="F:ferrous iron binding"/>
    <property type="evidence" value="ECO:0007669"/>
    <property type="project" value="Ensembl"/>
</dbReference>
<dbReference type="GO" id="GO:0042393">
    <property type="term" value="F:histone binding"/>
    <property type="evidence" value="ECO:0007669"/>
    <property type="project" value="Ensembl"/>
</dbReference>
<dbReference type="GO" id="GO:0030544">
    <property type="term" value="F:Hsp70 protein binding"/>
    <property type="evidence" value="ECO:0007669"/>
    <property type="project" value="Ensembl"/>
</dbReference>
<dbReference type="GO" id="GO:0042802">
    <property type="term" value="F:identical protein binding"/>
    <property type="evidence" value="ECO:0000250"/>
    <property type="project" value="UniProtKB"/>
</dbReference>
<dbReference type="GO" id="GO:0019894">
    <property type="term" value="F:kinesin binding"/>
    <property type="evidence" value="ECO:0007669"/>
    <property type="project" value="Ensembl"/>
</dbReference>
<dbReference type="GO" id="GO:0000287">
    <property type="term" value="F:magnesium ion binding"/>
    <property type="evidence" value="ECO:0007669"/>
    <property type="project" value="Ensembl"/>
</dbReference>
<dbReference type="GO" id="GO:0016491">
    <property type="term" value="F:oxidoreductase activity"/>
    <property type="evidence" value="ECO:0007669"/>
    <property type="project" value="Ensembl"/>
</dbReference>
<dbReference type="GO" id="GO:0005543">
    <property type="term" value="F:phospholipid binding"/>
    <property type="evidence" value="ECO:0007669"/>
    <property type="project" value="Ensembl"/>
</dbReference>
<dbReference type="GO" id="GO:0051219">
    <property type="term" value="F:phosphoprotein binding"/>
    <property type="evidence" value="ECO:0007669"/>
    <property type="project" value="Ensembl"/>
</dbReference>
<dbReference type="GO" id="GO:0000149">
    <property type="term" value="F:SNARE binding"/>
    <property type="evidence" value="ECO:0007669"/>
    <property type="project" value="Ensembl"/>
</dbReference>
<dbReference type="GO" id="GO:0048156">
    <property type="term" value="F:tau protein binding"/>
    <property type="evidence" value="ECO:0007669"/>
    <property type="project" value="Ensembl"/>
</dbReference>
<dbReference type="GO" id="GO:0141108">
    <property type="term" value="F:transporter regulator activity"/>
    <property type="evidence" value="ECO:0007669"/>
    <property type="project" value="Ensembl"/>
</dbReference>
<dbReference type="GO" id="GO:0008270">
    <property type="term" value="F:zinc ion binding"/>
    <property type="evidence" value="ECO:0007669"/>
    <property type="project" value="Ensembl"/>
</dbReference>
<dbReference type="GO" id="GO:0008344">
    <property type="term" value="P:adult locomotory behavior"/>
    <property type="evidence" value="ECO:0007669"/>
    <property type="project" value="Ensembl"/>
</dbReference>
<dbReference type="GO" id="GO:0071280">
    <property type="term" value="P:cellular response to copper ion"/>
    <property type="evidence" value="ECO:0007669"/>
    <property type="project" value="Ensembl"/>
</dbReference>
<dbReference type="GO" id="GO:0034599">
    <property type="term" value="P:cellular response to oxidative stress"/>
    <property type="evidence" value="ECO:0007669"/>
    <property type="project" value="Ensembl"/>
</dbReference>
<dbReference type="GO" id="GO:0007268">
    <property type="term" value="P:chemical synaptic transmission"/>
    <property type="evidence" value="ECO:0000318"/>
    <property type="project" value="GO_Central"/>
</dbReference>
<dbReference type="GO" id="GO:0042416">
    <property type="term" value="P:dopamine biosynthetic process"/>
    <property type="evidence" value="ECO:0007669"/>
    <property type="project" value="Ensembl"/>
</dbReference>
<dbReference type="GO" id="GO:0060079">
    <property type="term" value="P:excitatory postsynaptic potential"/>
    <property type="evidence" value="ECO:0007669"/>
    <property type="project" value="Ensembl"/>
</dbReference>
<dbReference type="GO" id="GO:0006631">
    <property type="term" value="P:fatty acid metabolic process"/>
    <property type="evidence" value="ECO:0007669"/>
    <property type="project" value="Ensembl"/>
</dbReference>
<dbReference type="GO" id="GO:0060291">
    <property type="term" value="P:long-term synaptic potentiation"/>
    <property type="evidence" value="ECO:0007669"/>
    <property type="project" value="Ensembl"/>
</dbReference>
<dbReference type="GO" id="GO:0001774">
    <property type="term" value="P:microglial cell activation"/>
    <property type="evidence" value="ECO:0007669"/>
    <property type="project" value="Ensembl"/>
</dbReference>
<dbReference type="GO" id="GO:0042775">
    <property type="term" value="P:mitochondrial ATP synthesis coupled electron transport"/>
    <property type="evidence" value="ECO:0007669"/>
    <property type="project" value="Ensembl"/>
</dbReference>
<dbReference type="GO" id="GO:0007006">
    <property type="term" value="P:mitochondrial membrane organization"/>
    <property type="evidence" value="ECO:0007669"/>
    <property type="project" value="Ensembl"/>
</dbReference>
<dbReference type="GO" id="GO:1904715">
    <property type="term" value="P:negative regulation of chaperone-mediated autophagy"/>
    <property type="evidence" value="ECO:0007669"/>
    <property type="project" value="Ensembl"/>
</dbReference>
<dbReference type="GO" id="GO:0051585">
    <property type="term" value="P:negative regulation of dopamine uptake involved in synaptic transmission"/>
    <property type="evidence" value="ECO:0007669"/>
    <property type="project" value="Ensembl"/>
</dbReference>
<dbReference type="GO" id="GO:0045920">
    <property type="term" value="P:negative regulation of exocytosis"/>
    <property type="evidence" value="ECO:0007669"/>
    <property type="project" value="Ensembl"/>
</dbReference>
<dbReference type="GO" id="GO:0031115">
    <property type="term" value="P:negative regulation of microtubule polymerization"/>
    <property type="evidence" value="ECO:0007669"/>
    <property type="project" value="Ensembl"/>
</dbReference>
<dbReference type="GO" id="GO:0043524">
    <property type="term" value="P:negative regulation of neuron apoptotic process"/>
    <property type="evidence" value="ECO:0007669"/>
    <property type="project" value="Ensembl"/>
</dbReference>
<dbReference type="GO" id="GO:0051622">
    <property type="term" value="P:negative regulation of norepinephrine uptake"/>
    <property type="evidence" value="ECO:0007669"/>
    <property type="project" value="Ensembl"/>
</dbReference>
<dbReference type="GO" id="GO:0010642">
    <property type="term" value="P:negative regulation of platelet-derived growth factor receptor signaling pathway"/>
    <property type="evidence" value="ECO:0007669"/>
    <property type="project" value="Ensembl"/>
</dbReference>
<dbReference type="GO" id="GO:0051612">
    <property type="term" value="P:negative regulation of serotonin uptake"/>
    <property type="evidence" value="ECO:0007669"/>
    <property type="project" value="Ensembl"/>
</dbReference>
<dbReference type="GO" id="GO:0070495">
    <property type="term" value="P:negative regulation of thrombin-activated receptor signaling pathway"/>
    <property type="evidence" value="ECO:0007669"/>
    <property type="project" value="Ensembl"/>
</dbReference>
<dbReference type="GO" id="GO:0051402">
    <property type="term" value="P:neuron apoptotic process"/>
    <property type="evidence" value="ECO:0007669"/>
    <property type="project" value="Ensembl"/>
</dbReference>
<dbReference type="GO" id="GO:0006638">
    <property type="term" value="P:neutral lipid metabolic process"/>
    <property type="evidence" value="ECO:0007669"/>
    <property type="project" value="Ensembl"/>
</dbReference>
<dbReference type="GO" id="GO:0006644">
    <property type="term" value="P:phospholipid metabolic process"/>
    <property type="evidence" value="ECO:0007669"/>
    <property type="project" value="Ensembl"/>
</dbReference>
<dbReference type="GO" id="GO:0045807">
    <property type="term" value="P:positive regulation of endocytosis"/>
    <property type="evidence" value="ECO:0007669"/>
    <property type="project" value="Ensembl"/>
</dbReference>
<dbReference type="GO" id="GO:0045921">
    <property type="term" value="P:positive regulation of exocytosis"/>
    <property type="evidence" value="ECO:0007669"/>
    <property type="project" value="Ensembl"/>
</dbReference>
<dbReference type="GO" id="GO:1903285">
    <property type="term" value="P:positive regulation of hydrogen peroxide catabolic process"/>
    <property type="evidence" value="ECO:0007669"/>
    <property type="project" value="Ensembl"/>
</dbReference>
<dbReference type="GO" id="GO:0050729">
    <property type="term" value="P:positive regulation of inflammatory response"/>
    <property type="evidence" value="ECO:0007669"/>
    <property type="project" value="Ensembl"/>
</dbReference>
<dbReference type="GO" id="GO:0060732">
    <property type="term" value="P:positive regulation of inositol phosphate biosynthetic process"/>
    <property type="evidence" value="ECO:0007669"/>
    <property type="project" value="Ensembl"/>
</dbReference>
<dbReference type="GO" id="GO:0001956">
    <property type="term" value="P:positive regulation of neurotransmitter secretion"/>
    <property type="evidence" value="ECO:0007669"/>
    <property type="project" value="Ensembl"/>
</dbReference>
<dbReference type="GO" id="GO:1904377">
    <property type="term" value="P:positive regulation of protein localization to cell periphery"/>
    <property type="evidence" value="ECO:0007669"/>
    <property type="project" value="Ensembl"/>
</dbReference>
<dbReference type="GO" id="GO:0001921">
    <property type="term" value="P:positive regulation of receptor recycling"/>
    <property type="evidence" value="ECO:0007669"/>
    <property type="project" value="Ensembl"/>
</dbReference>
<dbReference type="GO" id="GO:0051281">
    <property type="term" value="P:positive regulation of release of sequestered calcium ion into cytosol"/>
    <property type="evidence" value="ECO:0007669"/>
    <property type="project" value="Ensembl"/>
</dbReference>
<dbReference type="GO" id="GO:0035543">
    <property type="term" value="P:positive regulation of SNARE complex assembly"/>
    <property type="evidence" value="ECO:0007669"/>
    <property type="project" value="Ensembl"/>
</dbReference>
<dbReference type="GO" id="GO:0031648">
    <property type="term" value="P:protein destabilization"/>
    <property type="evidence" value="ECO:0007669"/>
    <property type="project" value="Ensembl"/>
</dbReference>
<dbReference type="GO" id="GO:0051262">
    <property type="term" value="P:protein tetramerization"/>
    <property type="evidence" value="ECO:0007669"/>
    <property type="project" value="Ensembl"/>
</dbReference>
<dbReference type="GO" id="GO:0031623">
    <property type="term" value="P:receptor internalization"/>
    <property type="evidence" value="ECO:0007669"/>
    <property type="project" value="Ensembl"/>
</dbReference>
<dbReference type="GO" id="GO:0050812">
    <property type="term" value="P:regulation of acyl-CoA biosynthetic process"/>
    <property type="evidence" value="ECO:0007669"/>
    <property type="project" value="Ensembl"/>
</dbReference>
<dbReference type="GO" id="GO:0014059">
    <property type="term" value="P:regulation of dopamine secretion"/>
    <property type="evidence" value="ECO:0007669"/>
    <property type="project" value="Ensembl"/>
</dbReference>
<dbReference type="GO" id="GO:0014048">
    <property type="term" value="P:regulation of glutamate secretion"/>
    <property type="evidence" value="ECO:0007669"/>
    <property type="project" value="Ensembl"/>
</dbReference>
<dbReference type="GO" id="GO:0040012">
    <property type="term" value="P:regulation of locomotion"/>
    <property type="evidence" value="ECO:0007669"/>
    <property type="project" value="Ensembl"/>
</dbReference>
<dbReference type="GO" id="GO:0048169">
    <property type="term" value="P:regulation of long-term neuronal synaptic plasticity"/>
    <property type="evidence" value="ECO:0007669"/>
    <property type="project" value="Ensembl"/>
</dbReference>
<dbReference type="GO" id="GO:0043030">
    <property type="term" value="P:regulation of macrophage activation"/>
    <property type="evidence" value="ECO:0007669"/>
    <property type="project" value="Ensembl"/>
</dbReference>
<dbReference type="GO" id="GO:1905606">
    <property type="term" value="P:regulation of presynapse assembly"/>
    <property type="evidence" value="ECO:0007669"/>
    <property type="project" value="Ensembl"/>
</dbReference>
<dbReference type="GO" id="GO:0070555">
    <property type="term" value="P:response to interleukin-1"/>
    <property type="evidence" value="ECO:0007669"/>
    <property type="project" value="Ensembl"/>
</dbReference>
<dbReference type="GO" id="GO:0010040">
    <property type="term" value="P:response to iron(II) ion"/>
    <property type="evidence" value="ECO:0007669"/>
    <property type="project" value="Ensembl"/>
</dbReference>
<dbReference type="GO" id="GO:0032496">
    <property type="term" value="P:response to lipopolysaccharide"/>
    <property type="evidence" value="ECO:0007669"/>
    <property type="project" value="Ensembl"/>
</dbReference>
<dbReference type="GO" id="GO:0032026">
    <property type="term" value="P:response to magnesium ion"/>
    <property type="evidence" value="ECO:0007669"/>
    <property type="project" value="Ensembl"/>
</dbReference>
<dbReference type="GO" id="GO:0034341">
    <property type="term" value="P:response to type II interferon"/>
    <property type="evidence" value="ECO:0007669"/>
    <property type="project" value="Ensembl"/>
</dbReference>
<dbReference type="GO" id="GO:0009410">
    <property type="term" value="P:response to xenobiotic stimulus"/>
    <property type="evidence" value="ECO:0007669"/>
    <property type="project" value="Ensembl"/>
</dbReference>
<dbReference type="GO" id="GO:0035493">
    <property type="term" value="P:SNARE complex assembly"/>
    <property type="evidence" value="ECO:0007669"/>
    <property type="project" value="Ensembl"/>
</dbReference>
<dbReference type="GO" id="GO:0050808">
    <property type="term" value="P:synapse organization"/>
    <property type="evidence" value="ECO:0000318"/>
    <property type="project" value="GO_Central"/>
</dbReference>
<dbReference type="GO" id="GO:0001963">
    <property type="term" value="P:synaptic transmission, dopaminergic"/>
    <property type="evidence" value="ECO:0007669"/>
    <property type="project" value="Ensembl"/>
</dbReference>
<dbReference type="GO" id="GO:0048488">
    <property type="term" value="P:synaptic vesicle endocytosis"/>
    <property type="evidence" value="ECO:0000318"/>
    <property type="project" value="GO_Central"/>
</dbReference>
<dbReference type="GO" id="GO:0016082">
    <property type="term" value="P:synaptic vesicle priming"/>
    <property type="evidence" value="ECO:0007669"/>
    <property type="project" value="Ensembl"/>
</dbReference>
<dbReference type="GO" id="GO:0048489">
    <property type="term" value="P:synaptic vesicle transport"/>
    <property type="evidence" value="ECO:0007669"/>
    <property type="project" value="Ensembl"/>
</dbReference>
<dbReference type="FunFam" id="1.10.287.700:FF:000001">
    <property type="entry name" value="Alpha-synuclein"/>
    <property type="match status" value="1"/>
</dbReference>
<dbReference type="Gene3D" id="1.10.287.700">
    <property type="entry name" value="Helix hairpin bin"/>
    <property type="match status" value="1"/>
</dbReference>
<dbReference type="InterPro" id="IPR001058">
    <property type="entry name" value="Synuclein"/>
</dbReference>
<dbReference type="InterPro" id="IPR002460">
    <property type="entry name" value="Synuclein_alpha"/>
</dbReference>
<dbReference type="PANTHER" id="PTHR13820:SF5">
    <property type="entry name" value="ALPHA-SYNUCLEIN"/>
    <property type="match status" value="1"/>
</dbReference>
<dbReference type="PANTHER" id="PTHR13820">
    <property type="entry name" value="SYNUCLEIN"/>
    <property type="match status" value="1"/>
</dbReference>
<dbReference type="Pfam" id="PF01387">
    <property type="entry name" value="Synuclein"/>
    <property type="match status" value="1"/>
</dbReference>
<dbReference type="PRINTS" id="PR01212">
    <property type="entry name" value="ASYNUCLEIN"/>
</dbReference>
<dbReference type="PRINTS" id="PR01211">
    <property type="entry name" value="SYNUCLEIN"/>
</dbReference>
<dbReference type="SUPFAM" id="SSF118375">
    <property type="entry name" value="Synuclein"/>
    <property type="match status" value="1"/>
</dbReference>
<feature type="chain" id="PRO_0000184021" description="Alpha-synuclein">
    <location>
        <begin position="1"/>
        <end position="140"/>
    </location>
</feature>
<feature type="region of interest" description="Disordered" evidence="5">
    <location>
        <begin position="100"/>
        <end position="140"/>
    </location>
</feature>
<feature type="region of interest" description="Interaction with SERF1A" evidence="4">
    <location>
        <begin position="111"/>
        <end position="140"/>
    </location>
</feature>
<feature type="compositionally biased region" description="Acidic residues" evidence="5">
    <location>
        <begin position="112"/>
        <end position="140"/>
    </location>
</feature>
<feature type="binding site" evidence="1">
    <location>
        <position position="2"/>
    </location>
    <ligand>
        <name>Cu cation</name>
        <dbReference type="ChEBI" id="CHEBI:23378"/>
    </ligand>
</feature>
<feature type="binding site" evidence="1">
    <location>
        <position position="50"/>
    </location>
    <ligand>
        <name>Cu cation</name>
        <dbReference type="ChEBI" id="CHEBI:23378"/>
    </ligand>
</feature>
<feature type="modified residue" description="N-acetylmethionine" evidence="4">
    <location>
        <position position="1"/>
    </location>
</feature>
<feature type="modified residue" description="Phosphoserine" evidence="4">
    <location>
        <position position="87"/>
    </location>
</feature>
<feature type="modified residue" description="Phosphotyrosine; by FYN" evidence="4">
    <location>
        <position position="125"/>
    </location>
</feature>
<feature type="modified residue" description="Phosphoserine; by PLK2" evidence="4">
    <location>
        <position position="129"/>
    </location>
</feature>
<reference key="1">
    <citation type="journal article" date="2004" name="Genomics">
        <title>Alpha-synuclein A53T substitution associated with Parkinson disease also marks the divergence of Old World and New World primates.</title>
        <authorList>
            <person name="Hamilton B.A."/>
        </authorList>
    </citation>
    <scope>NUCLEOTIDE SEQUENCE [GENOMIC DNA]</scope>
</reference>
<keyword id="KW-0007">Acetylation</keyword>
<keyword id="KW-0966">Cell projection</keyword>
<keyword id="KW-0186">Copper</keyword>
<keyword id="KW-0963">Cytoplasm</keyword>
<keyword id="KW-0472">Membrane</keyword>
<keyword id="KW-0479">Metal-binding</keyword>
<keyword id="KW-0539">Nucleus</keyword>
<keyword id="KW-0597">Phosphoprotein</keyword>
<keyword id="KW-1185">Reference proteome</keyword>
<keyword id="KW-0677">Repeat</keyword>
<keyword id="KW-0964">Secreted</keyword>
<keyword id="KW-0770">Synapse</keyword>
<keyword id="KW-0832">Ubl conjugation</keyword>
<proteinExistence type="inferred from homology"/>
<sequence length="140" mass="14460">MDVFMKGLSKAKEGVVAAAEKTKQGVAEAAGKTKEGVLYVGSKTKEGVVHGVATVAEKTKEQVTNVGGAVVTGVTAVAQKTVEGAGSIAAATGFVKKDQLGKNEEGAPQEGILEDMPVDPDNEAYEMPSEEGYQDYEPEA</sequence>
<name>SYUA_GORGO</name>
<accession>P61140</accession>
<gene>
    <name type="primary">SNCA</name>
</gene>
<comment type="function">
    <text evidence="4">Neuronal protein that plays several roles in synaptic activity such as regulation of synaptic vesicle trafficking and subsequent neurotransmitter release (By similarity). Participates as a monomer in synaptic vesicle exocytosis by enhancing vesicle priming, fusion and dilation of exocytotic fusion pores (By similarity). Mechanistically, acts by increasing local Ca(2+) release from microdomains which is essential for the enhancement of ATP-induced exocytosis (By similarity). Also acts as a molecular chaperone in its multimeric membrane-bound state, assisting in the folding of synaptic fusion components called SNAREs (Soluble NSF Attachment Protein REceptors) at presynaptic plasma membrane in conjunction with cysteine string protein-alpha/DNAJC5 (By similarity). This chaperone activity is important to sustain normal SNARE-complex assembly during aging (By similarity). Also plays a role in the regulation of the dopamine neurotransmission by associating with the dopamine transporter (DAT1) and thereby modulating its activity (By similarity).</text>
</comment>
<comment type="subunit">
    <text evidence="2 3 4">Soluble monomer. Homotetramer. A dynamic intracellular population of tetramers and monomers coexists normally and the tetramer plays an essential role in maintaining homeostasis (By similarity). Interacts with UCHL1 (By similarity). Interacts with phospholipase D and histones. Interacts (via N-terminus) with synphilin-1/SNCAIP; this interaction promotes formation of SNCA inclusions in the cytoplasm. Interacts with CALM1. Interacts with STXBP1; this interaction controls SNCA self-replicating aggregation. Interacts with SNARE components VAMP2 and SNAP25; these interactions allows SNARE complex assembly and integrity (By similarity). Interacts with RPH3A and RAB3A (By similarity). Interacts with SERF1A; this interaction promotes the aggregation of SNCA (By similarity). Interacts with SEPTIN4 (By similarity). Interacts with DDX10; this interaction causes DDX10 mislocalization to the nucleoplasm and cytoplasmic inclusions (By similarity).</text>
</comment>
<comment type="subcellular location">
    <subcellularLocation>
        <location evidence="4">Cytoplasm</location>
    </subcellularLocation>
    <subcellularLocation>
        <location evidence="4">Membrane</location>
    </subcellularLocation>
    <subcellularLocation>
        <location evidence="4">Nucleus</location>
    </subcellularLocation>
    <subcellularLocation>
        <location evidence="4">Synapse</location>
    </subcellularLocation>
    <subcellularLocation>
        <location evidence="4">Secreted</location>
    </subcellularLocation>
    <subcellularLocation>
        <location evidence="2">Cell projection</location>
        <location evidence="2">Axon</location>
    </subcellularLocation>
    <text evidence="2 4">Membrane-bound in dopaminergic neurons (By similarity). Expressed and colocalized with SEPTIN4 in dopaminergic axon terminals, especially at the varicosities (By similarity).</text>
</comment>
<comment type="PTM">
    <text evidence="4">Phosphorylated, predominantly on serine residues. Phosphorylated on Tyr-125 upon osmotic stress.</text>
</comment>
<comment type="PTM">
    <text evidence="3">Ubiquitinated. The predominant conjugate is the diubiquitinated form.</text>
</comment>
<comment type="PTM">
    <text evidence="4">Acetylation at Met-1 seems to be important for proper folding and native oligomeric structure.</text>
</comment>
<comment type="similarity">
    <text evidence="6">Belongs to the synuclein family.</text>
</comment>
<protein>
    <recommendedName>
        <fullName>Alpha-synuclein</fullName>
    </recommendedName>
</protein>
<organism>
    <name type="scientific">Gorilla gorilla gorilla</name>
    <name type="common">Western lowland gorilla</name>
    <dbReference type="NCBI Taxonomy" id="9595"/>
    <lineage>
        <taxon>Eukaryota</taxon>
        <taxon>Metazoa</taxon>
        <taxon>Chordata</taxon>
        <taxon>Craniata</taxon>
        <taxon>Vertebrata</taxon>
        <taxon>Euteleostomi</taxon>
        <taxon>Mammalia</taxon>
        <taxon>Eutheria</taxon>
        <taxon>Euarchontoglires</taxon>
        <taxon>Primates</taxon>
        <taxon>Haplorrhini</taxon>
        <taxon>Catarrhini</taxon>
        <taxon>Hominidae</taxon>
        <taxon>Gorilla</taxon>
    </lineage>
</organism>
<evidence type="ECO:0000250" key="1"/>
<evidence type="ECO:0000250" key="2">
    <source>
        <dbReference type="UniProtKB" id="O55042"/>
    </source>
</evidence>
<evidence type="ECO:0000250" key="3">
    <source>
        <dbReference type="UniProtKB" id="P37377"/>
    </source>
</evidence>
<evidence type="ECO:0000250" key="4">
    <source>
        <dbReference type="UniProtKB" id="P37840"/>
    </source>
</evidence>
<evidence type="ECO:0000256" key="5">
    <source>
        <dbReference type="SAM" id="MobiDB-lite"/>
    </source>
</evidence>
<evidence type="ECO:0000305" key="6"/>